<protein>
    <recommendedName>
        <fullName>Protein CbrA</fullName>
    </recommendedName>
</protein>
<feature type="chain" id="PRO_0000320289" description="Protein CbrA">
    <location>
        <begin position="1"/>
        <end position="354"/>
    </location>
</feature>
<dbReference type="EMBL" id="CP000038">
    <property type="protein sequence ID" value="AAZ90190.1"/>
    <property type="status" value="ALT_INIT"/>
    <property type="molecule type" value="Genomic_DNA"/>
</dbReference>
<dbReference type="RefSeq" id="WP_005140515.1">
    <property type="nucleotide sequence ID" value="NC_007384.1"/>
</dbReference>
<dbReference type="SMR" id="Q3YWC2"/>
<dbReference type="GeneID" id="93778431"/>
<dbReference type="KEGG" id="ssn:SSON_3641"/>
<dbReference type="HOGENOM" id="CLU_024648_1_0_6"/>
<dbReference type="Proteomes" id="UP000002529">
    <property type="component" value="Chromosome"/>
</dbReference>
<dbReference type="GO" id="GO:0071949">
    <property type="term" value="F:FAD binding"/>
    <property type="evidence" value="ECO:0007669"/>
    <property type="project" value="InterPro"/>
</dbReference>
<dbReference type="FunFam" id="3.50.50.60:FF:000151">
    <property type="entry name" value="Protein CbrA"/>
    <property type="match status" value="1"/>
</dbReference>
<dbReference type="Gene3D" id="3.50.50.60">
    <property type="entry name" value="FAD/NAD(P)-binding domain"/>
    <property type="match status" value="1"/>
</dbReference>
<dbReference type="InterPro" id="IPR002938">
    <property type="entry name" value="FAD-bd"/>
</dbReference>
<dbReference type="InterPro" id="IPR036188">
    <property type="entry name" value="FAD/NAD-bd_sf"/>
</dbReference>
<dbReference type="InterPro" id="IPR050407">
    <property type="entry name" value="Geranylgeranyl_reductase"/>
</dbReference>
<dbReference type="NCBIfam" id="NF008519">
    <property type="entry name" value="PRK11445.1"/>
    <property type="match status" value="1"/>
</dbReference>
<dbReference type="PANTHER" id="PTHR42685:SF22">
    <property type="entry name" value="CONDITIONED MEDIUM FACTOR RECEPTOR 1"/>
    <property type="match status" value="1"/>
</dbReference>
<dbReference type="PANTHER" id="PTHR42685">
    <property type="entry name" value="GERANYLGERANYL DIPHOSPHATE REDUCTASE"/>
    <property type="match status" value="1"/>
</dbReference>
<dbReference type="Pfam" id="PF01494">
    <property type="entry name" value="FAD_binding_3"/>
    <property type="match status" value="1"/>
</dbReference>
<dbReference type="PRINTS" id="PR00420">
    <property type="entry name" value="RNGMNOXGNASE"/>
</dbReference>
<dbReference type="SUPFAM" id="SSF51905">
    <property type="entry name" value="FAD/NAD(P)-binding domain"/>
    <property type="match status" value="1"/>
</dbReference>
<comment type="similarity">
    <text evidence="1">Belongs to the CbrA family.</text>
</comment>
<comment type="sequence caution" evidence="1">
    <conflict type="erroneous initiation">
        <sequence resource="EMBL-CDS" id="AAZ90190"/>
    </conflict>
</comment>
<sequence length="354" mass="40101">MEHFDVAIIGLGPAGSALARKLAGKMQVIALDKKHQHGTEGFSKPCGGLLAPDAQRSFIRDGLTLPVDVIANPQIFSVKTVDVAASLTRNYQRSYININRHAFDLWMKSLIPASVEVYHDSLCRKIWREDDKWHVIFRADGWEQHITARYLVGADGANSMVRRHLYPDHQIRKYVAIQQWFAEKHPVPFYSCIFDNAITDCYSWSISKDGYFIFGGAYPMKDGQTRFTTLKEKMSAFQFQFGKAVKSEKCTVLFPSRWQDFVCGKDNAFLIGEAAGFISASSLEGISYALDSADILRSVLLKQPEKLNTAYWRATRKLRLKLFGKIVKSRCLTAPALRKWIMRSGVAHIPQLKD</sequence>
<gene>
    <name type="primary">cbrA</name>
    <name type="ordered locus">SSON_3641</name>
</gene>
<accession>Q3YWC2</accession>
<reference key="1">
    <citation type="journal article" date="2005" name="Nucleic Acids Res.">
        <title>Genome dynamics and diversity of Shigella species, the etiologic agents of bacillary dysentery.</title>
        <authorList>
            <person name="Yang F."/>
            <person name="Yang J."/>
            <person name="Zhang X."/>
            <person name="Chen L."/>
            <person name="Jiang Y."/>
            <person name="Yan Y."/>
            <person name="Tang X."/>
            <person name="Wang J."/>
            <person name="Xiong Z."/>
            <person name="Dong J."/>
            <person name="Xue Y."/>
            <person name="Zhu Y."/>
            <person name="Xu X."/>
            <person name="Sun L."/>
            <person name="Chen S."/>
            <person name="Nie H."/>
            <person name="Peng J."/>
            <person name="Xu J."/>
            <person name="Wang Y."/>
            <person name="Yuan Z."/>
            <person name="Wen Y."/>
            <person name="Yao Z."/>
            <person name="Shen Y."/>
            <person name="Qiang B."/>
            <person name="Hou Y."/>
            <person name="Yu J."/>
            <person name="Jin Q."/>
        </authorList>
    </citation>
    <scope>NUCLEOTIDE SEQUENCE [LARGE SCALE GENOMIC DNA]</scope>
    <source>
        <strain>Ss046</strain>
    </source>
</reference>
<proteinExistence type="inferred from homology"/>
<name>CBRA_SHISS</name>
<organism>
    <name type="scientific">Shigella sonnei (strain Ss046)</name>
    <dbReference type="NCBI Taxonomy" id="300269"/>
    <lineage>
        <taxon>Bacteria</taxon>
        <taxon>Pseudomonadati</taxon>
        <taxon>Pseudomonadota</taxon>
        <taxon>Gammaproteobacteria</taxon>
        <taxon>Enterobacterales</taxon>
        <taxon>Enterobacteriaceae</taxon>
        <taxon>Shigella</taxon>
    </lineage>
</organism>
<evidence type="ECO:0000305" key="1"/>
<keyword id="KW-1185">Reference proteome</keyword>